<dbReference type="EC" id="2.3.1.46" evidence="1"/>
<dbReference type="EMBL" id="CP001063">
    <property type="protein sequence ID" value="ACD07330.1"/>
    <property type="molecule type" value="Genomic_DNA"/>
</dbReference>
<dbReference type="SMR" id="B2TWJ5"/>
<dbReference type="STRING" id="344609.SbBS512_E4507"/>
<dbReference type="KEGG" id="sbc:SbBS512_E4507"/>
<dbReference type="HOGENOM" id="CLU_057851_0_1_6"/>
<dbReference type="UniPathway" id="UPA00051">
    <property type="reaction ID" value="UER00075"/>
</dbReference>
<dbReference type="Proteomes" id="UP000001030">
    <property type="component" value="Chromosome"/>
</dbReference>
<dbReference type="GO" id="GO:0005737">
    <property type="term" value="C:cytoplasm"/>
    <property type="evidence" value="ECO:0007669"/>
    <property type="project" value="UniProtKB-SubCell"/>
</dbReference>
<dbReference type="GO" id="GO:0004414">
    <property type="term" value="F:homoserine O-acetyltransferase activity"/>
    <property type="evidence" value="ECO:0007669"/>
    <property type="project" value="UniProtKB-UniRule"/>
</dbReference>
<dbReference type="GO" id="GO:0008899">
    <property type="term" value="F:homoserine O-succinyltransferase activity"/>
    <property type="evidence" value="ECO:0007669"/>
    <property type="project" value="UniProtKB-EC"/>
</dbReference>
<dbReference type="GO" id="GO:0019281">
    <property type="term" value="P:L-methionine biosynthetic process from homoserine via O-succinyl-L-homoserine and cystathionine"/>
    <property type="evidence" value="ECO:0007669"/>
    <property type="project" value="InterPro"/>
</dbReference>
<dbReference type="CDD" id="cd03131">
    <property type="entry name" value="GATase1_HTS"/>
    <property type="match status" value="1"/>
</dbReference>
<dbReference type="FunFam" id="3.40.50.880:FF:000004">
    <property type="entry name" value="Homoserine O-succinyltransferase"/>
    <property type="match status" value="1"/>
</dbReference>
<dbReference type="Gene3D" id="3.40.50.880">
    <property type="match status" value="1"/>
</dbReference>
<dbReference type="HAMAP" id="MF_00295">
    <property type="entry name" value="MetA_acyltransf"/>
    <property type="match status" value="1"/>
</dbReference>
<dbReference type="InterPro" id="IPR029062">
    <property type="entry name" value="Class_I_gatase-like"/>
</dbReference>
<dbReference type="InterPro" id="IPR005697">
    <property type="entry name" value="HST_MetA"/>
</dbReference>
<dbReference type="InterPro" id="IPR033752">
    <property type="entry name" value="MetA_family"/>
</dbReference>
<dbReference type="NCBIfam" id="TIGR01001">
    <property type="entry name" value="metA"/>
    <property type="match status" value="1"/>
</dbReference>
<dbReference type="PANTHER" id="PTHR20919">
    <property type="entry name" value="HOMOSERINE O-SUCCINYLTRANSFERASE"/>
    <property type="match status" value="1"/>
</dbReference>
<dbReference type="PANTHER" id="PTHR20919:SF0">
    <property type="entry name" value="HOMOSERINE O-SUCCINYLTRANSFERASE"/>
    <property type="match status" value="1"/>
</dbReference>
<dbReference type="Pfam" id="PF04204">
    <property type="entry name" value="HTS"/>
    <property type="match status" value="1"/>
</dbReference>
<dbReference type="PIRSF" id="PIRSF000450">
    <property type="entry name" value="H_ser_succinyltr"/>
    <property type="match status" value="1"/>
</dbReference>
<dbReference type="SUPFAM" id="SSF52317">
    <property type="entry name" value="Class I glutamine amidotransferase-like"/>
    <property type="match status" value="1"/>
</dbReference>
<protein>
    <recommendedName>
        <fullName evidence="1">Homoserine O-succinyltransferase</fullName>
        <shortName evidence="1">HST</shortName>
        <ecNumber evidence="1">2.3.1.46</ecNumber>
    </recommendedName>
    <alternativeName>
        <fullName evidence="1">Homoserine transsuccinylase</fullName>
        <shortName evidence="1">HTS</shortName>
    </alternativeName>
</protein>
<name>METAS_SHIB3</name>
<keyword id="KW-0012">Acyltransferase</keyword>
<keyword id="KW-0028">Amino-acid biosynthesis</keyword>
<keyword id="KW-0963">Cytoplasm</keyword>
<keyword id="KW-0486">Methionine biosynthesis</keyword>
<keyword id="KW-1185">Reference proteome</keyword>
<keyword id="KW-0808">Transferase</keyword>
<comment type="function">
    <text evidence="1">Transfers a succinyl group from succinyl-CoA to L-homoserine, forming succinyl-L-homoserine.</text>
</comment>
<comment type="catalytic activity">
    <reaction evidence="1">
        <text>L-homoserine + succinyl-CoA = O-succinyl-L-homoserine + CoA</text>
        <dbReference type="Rhea" id="RHEA:22008"/>
        <dbReference type="ChEBI" id="CHEBI:57287"/>
        <dbReference type="ChEBI" id="CHEBI:57292"/>
        <dbReference type="ChEBI" id="CHEBI:57476"/>
        <dbReference type="ChEBI" id="CHEBI:57661"/>
        <dbReference type="EC" id="2.3.1.46"/>
    </reaction>
</comment>
<comment type="pathway">
    <text evidence="1">Amino-acid biosynthesis; L-methionine biosynthesis via de novo pathway; O-succinyl-L-homoserine from L-homoserine: step 1/1.</text>
</comment>
<comment type="subunit">
    <text evidence="1">Homodimer.</text>
</comment>
<comment type="subcellular location">
    <subcellularLocation>
        <location evidence="1">Cytoplasm</location>
    </subcellularLocation>
</comment>
<comment type="similarity">
    <text evidence="1">Belongs to the MetA family.</text>
</comment>
<reference key="1">
    <citation type="submission" date="2008-05" db="EMBL/GenBank/DDBJ databases">
        <title>Complete sequence of Shigella boydii serotype 18 strain BS512.</title>
        <authorList>
            <person name="Rasko D.A."/>
            <person name="Rosovitz M."/>
            <person name="Maurelli A.T."/>
            <person name="Myers G."/>
            <person name="Seshadri R."/>
            <person name="Cer R."/>
            <person name="Jiang L."/>
            <person name="Ravel J."/>
            <person name="Sebastian Y."/>
        </authorList>
    </citation>
    <scope>NUCLEOTIDE SEQUENCE [LARGE SCALE GENOMIC DNA]</scope>
    <source>
        <strain>CDC 3083-94 / BS512</strain>
    </source>
</reference>
<evidence type="ECO:0000255" key="1">
    <source>
        <dbReference type="HAMAP-Rule" id="MF_00295"/>
    </source>
</evidence>
<feature type="chain" id="PRO_1000115196" description="Homoserine O-succinyltransferase">
    <location>
        <begin position="1"/>
        <end position="309"/>
    </location>
</feature>
<feature type="active site" description="Acyl-thioester intermediate" evidence="1">
    <location>
        <position position="142"/>
    </location>
</feature>
<feature type="active site" description="Proton acceptor" evidence="1">
    <location>
        <position position="235"/>
    </location>
</feature>
<feature type="active site" evidence="1">
    <location>
        <position position="237"/>
    </location>
</feature>
<feature type="binding site" evidence="1">
    <location>
        <position position="163"/>
    </location>
    <ligand>
        <name>substrate</name>
    </ligand>
</feature>
<feature type="binding site" evidence="1">
    <location>
        <position position="192"/>
    </location>
    <ligand>
        <name>substrate</name>
    </ligand>
</feature>
<feature type="binding site" evidence="1">
    <location>
        <position position="249"/>
    </location>
    <ligand>
        <name>substrate</name>
    </ligand>
</feature>
<feature type="site" description="Important for acyl-CoA specificity" evidence="1">
    <location>
        <position position="111"/>
    </location>
</feature>
<feature type="site" description="Important for substrate specificity" evidence="1">
    <location>
        <position position="192"/>
    </location>
</feature>
<gene>
    <name evidence="1" type="primary">metAS</name>
    <name type="ordered locus">SbBS512_E4507</name>
</gene>
<proteinExistence type="inferred from homology"/>
<sequence>MPIRVPDELPAVNFLREENVFVMTTSRASGQEIRPLKVLILNLMPKKIETENQFLRLLSNSPLQVDIQLLRIDSRESRNTPAEHLNNFYCNFEDIQEQNFDGLIVTGAPLGLVEFNDVAYWPQIKQVLEWSKDHVTSTLFVCWAVQAALNILYGIPKQTRTDKLSGVYEHHILHPHALLTRGFDDSFLAPHSRYADFPAALIRDYTDLEILAETEEGDAYLFASKDKRIAFVTGHPEYDAQTLAQEYFRDVEAGLDPEVPYNYFPHNDPQNTPRASWRSHGNLLFTNWLNYYVYQITPYDLRHMNPTLD</sequence>
<accession>B2TWJ5</accession>
<organism>
    <name type="scientific">Shigella boydii serotype 18 (strain CDC 3083-94 / BS512)</name>
    <dbReference type="NCBI Taxonomy" id="344609"/>
    <lineage>
        <taxon>Bacteria</taxon>
        <taxon>Pseudomonadati</taxon>
        <taxon>Pseudomonadota</taxon>
        <taxon>Gammaproteobacteria</taxon>
        <taxon>Enterobacterales</taxon>
        <taxon>Enterobacteriaceae</taxon>
        <taxon>Shigella</taxon>
    </lineage>
</organism>